<evidence type="ECO:0000250" key="1">
    <source>
        <dbReference type="UniProtKB" id="P23083"/>
    </source>
</evidence>
<evidence type="ECO:0000255" key="2">
    <source>
        <dbReference type="PROSITE-ProRule" id="PRU00114"/>
    </source>
</evidence>
<evidence type="ECO:0000269" key="3">
    <source>
    </source>
</evidence>
<evidence type="ECO:0000269" key="4">
    <source>
    </source>
</evidence>
<evidence type="ECO:0000269" key="5">
    <source>
    </source>
</evidence>
<evidence type="ECO:0000303" key="6">
    <source>
    </source>
</evidence>
<evidence type="ECO:0000303" key="7">
    <source>
    </source>
</evidence>
<evidence type="ECO:0000303" key="8">
    <source>
    </source>
</evidence>
<evidence type="ECO:0000303" key="9">
    <source>
    </source>
</evidence>
<evidence type="ECO:0000303" key="10">
    <source>
    </source>
</evidence>
<evidence type="ECO:0000303" key="11">
    <source ref="6"/>
</evidence>
<evidence type="ECO:0000305" key="12"/>
<evidence type="ECO:0000305" key="13">
    <source>
    </source>
</evidence>
<evidence type="ECO:0000305" key="14">
    <source>
    </source>
</evidence>
<comment type="function">
    <text evidence="7 8 9 10">V region of the variable domain of immunoglobulin heavy chains that participates in the antigen recognition (PubMed:24600447). Immunoglobulins, also known as antibodies, are membrane-bound or secreted glycoproteins produced by B lymphocytes. In the recognition phase of humoral immunity, the membrane-bound immunoglobulins serve as receptors which, upon binding of a specific antigen, trigger the clonal expansion and differentiation of B lymphocytes into immunoglobulins-secreting plasma cells. Secreted immunoglobulins mediate the effector phase of humoral immunity, which results in the elimination of bound antigens (PubMed:20176268, PubMed:22158414). The antigen binding site is formed by the variable domain of one heavy chain, together with that of its associated light chain. Thus, each immunoglobulin has two antigen binding sites with remarkable affinity for a particular antigen. The variable domains are assembled by a process called V-(D)-J rearrangement and can then be subjected to somatic hypermutations which, after exposure to antigen and selection, allow affinity maturation for a particular antigen (PubMed:17576170, PubMed:20176268).</text>
</comment>
<comment type="subunit">
    <text evidence="8">Immunoglobulins are composed of two identical heavy chains and two identical light chains; disulfide-linked.</text>
</comment>
<comment type="subcellular location">
    <subcellularLocation>
        <location evidence="8 9">Secreted</location>
    </subcellularLocation>
    <subcellularLocation>
        <location evidence="8 9">Cell membrane</location>
    </subcellularLocation>
</comment>
<comment type="polymorphism">
    <text evidence="12">There are several alleles. The sequence shown is that of IMGT allele IGHV1-69*06.</text>
</comment>
<comment type="caution">
    <text evidence="12">For examples of full-length immunoglobulin heavy chains (of different isotypes) see AC P0DOX2, AC P0DOX3, AC P0DOX4, AC P0DOX5 and AC P0DOX6.</text>
</comment>
<proteinExistence type="evidence at protein level"/>
<organism>
    <name type="scientific">Homo sapiens</name>
    <name type="common">Human</name>
    <dbReference type="NCBI Taxonomy" id="9606"/>
    <lineage>
        <taxon>Eukaryota</taxon>
        <taxon>Metazoa</taxon>
        <taxon>Chordata</taxon>
        <taxon>Craniata</taxon>
        <taxon>Vertebrata</taxon>
        <taxon>Euteleostomi</taxon>
        <taxon>Mammalia</taxon>
        <taxon>Eutheria</taxon>
        <taxon>Euarchontoglires</taxon>
        <taxon>Primates</taxon>
        <taxon>Haplorrhini</taxon>
        <taxon>Catarrhini</taxon>
        <taxon>Hominidae</taxon>
        <taxon>Homo</taxon>
    </lineage>
</organism>
<keyword id="KW-1064">Adaptive immunity</keyword>
<keyword id="KW-1003">Cell membrane</keyword>
<keyword id="KW-0903">Direct protein sequencing</keyword>
<keyword id="KW-1015">Disulfide bond</keyword>
<keyword id="KW-0391">Immunity</keyword>
<keyword id="KW-1280">Immunoglobulin</keyword>
<keyword id="KW-0393">Immunoglobulin domain</keyword>
<keyword id="KW-0472">Membrane</keyword>
<keyword id="KW-0873">Pyrrolidone carboxylic acid</keyword>
<keyword id="KW-1185">Reference proteome</keyword>
<keyword id="KW-0964">Secreted</keyword>
<keyword id="KW-0732">Signal</keyword>
<feature type="signal peptide" evidence="4 5">
    <location>
        <begin position="1"/>
        <end position="19"/>
    </location>
</feature>
<feature type="chain" id="PRO_0000059902" description="Immunoglobulin heavy variable 1-69" evidence="4 5">
    <location>
        <begin position="20"/>
        <end position="117"/>
    </location>
</feature>
<feature type="domain" description="Ig-like" evidence="2">
    <location>
        <begin position="20"/>
        <end position="117" status="greater than"/>
    </location>
</feature>
<feature type="region of interest" description="Framework-1" evidence="1">
    <location>
        <begin position="20"/>
        <end position="44"/>
    </location>
</feature>
<feature type="region of interest" description="Complementarity-determining-1" evidence="1">
    <location>
        <begin position="45"/>
        <end position="52"/>
    </location>
</feature>
<feature type="region of interest" description="Framework-2" evidence="1">
    <location>
        <begin position="53"/>
        <end position="69"/>
    </location>
</feature>
<feature type="region of interest" description="Complementarity-determining-2" evidence="1">
    <location>
        <begin position="70"/>
        <end position="77"/>
    </location>
</feature>
<feature type="region of interest" description="Framework-3" evidence="1">
    <location>
        <begin position="78"/>
        <end position="115"/>
    </location>
</feature>
<feature type="region of interest" description="Complementarity-determining-3" evidence="1">
    <location>
        <begin position="116"/>
        <end position="117" status="greater than"/>
    </location>
</feature>
<feature type="modified residue" description="Pyrrolidone carboxylic acid" evidence="4 5">
    <location>
        <position position="20"/>
    </location>
</feature>
<feature type="disulfide bond" evidence="2 3">
    <location>
        <begin position="41"/>
        <end position="115"/>
    </location>
</feature>
<feature type="sequence conflict" description="In Ref. 3; AA sequence." evidence="12" ref="3">
    <original>V</original>
    <variation>M</variation>
    <location>
        <position position="24"/>
    </location>
</feature>
<feature type="sequence conflict" description="In Ref. 3; AA sequence." evidence="12" ref="3">
    <original>K</original>
    <variation>R</variation>
    <location>
        <position position="38"/>
    </location>
</feature>
<feature type="sequence conflict" description="In Ref. 3; AA sequence." evidence="12" ref="3">
    <original>S</original>
    <variation>T</variation>
    <location>
        <position position="40"/>
    </location>
</feature>
<feature type="sequence conflict" description="In Ref. 3; AA sequence." evidence="12" ref="3">
    <original>A</original>
    <variation>T</variation>
    <location>
        <position position="43"/>
    </location>
</feature>
<feature type="sequence conflict" description="In Ref. 3; AA sequence." evidence="12" ref="3">
    <original>SS</original>
    <variation>VD</variation>
    <location>
        <begin position="49"/>
        <end position="50"/>
    </location>
</feature>
<feature type="sequence conflict" description="In Ref. 2; AA sequence." evidence="12" ref="2">
    <original>SY</original>
    <variation>RS</variation>
    <location>
        <begin position="50"/>
        <end position="51"/>
    </location>
</feature>
<feature type="sequence conflict" description="In Ref. 3; AA sequence." evidence="12" ref="3">
    <original>S</original>
    <variation>G</variation>
    <location>
        <position position="50"/>
    </location>
</feature>
<feature type="sequence conflict" description="In Ref. 3; AA sequence." evidence="12" ref="3">
    <original>AIS</original>
    <variation>KGL</variation>
    <location>
        <begin position="52"/>
        <end position="54"/>
    </location>
</feature>
<feature type="sequence conflict" description="In Ref. 3; AA sequence." evidence="12" ref="3">
    <original>A</original>
    <variation>T</variation>
    <location>
        <position position="52"/>
    </location>
</feature>
<feature type="sequence conflict" description="In Ref. 2; AA sequence." evidence="12" ref="2">
    <original>S</original>
    <variation>I</variation>
    <location>
        <position position="54"/>
    </location>
</feature>
<feature type="sequence conflict" description="In Ref. 3; AA sequence." evidence="12" ref="3">
    <original>Q</original>
    <variation>K</variation>
    <location>
        <position position="62"/>
    </location>
</feature>
<feature type="sequence conflict" description="In Ref. 3; AA sequence." evidence="12" ref="3">
    <original>Q</original>
    <variation>R</variation>
    <location>
        <position position="62"/>
    </location>
</feature>
<feature type="sequence conflict" description="In Ref. 3; AA sequence." evidence="12" ref="3">
    <original>M</original>
    <variation>V</variation>
    <location>
        <position position="67"/>
    </location>
</feature>
<feature type="sequence conflict" description="In Ref. 3; AA sequence." evidence="12" ref="3">
    <original>GIIPIFGT</original>
    <variation>SP</variation>
    <location>
        <begin position="69"/>
        <end position="76"/>
    </location>
</feature>
<feature type="sequence conflict" description="In Ref. 3; AA sequence." evidence="12" ref="3">
    <original>G</original>
    <variation>Q</variation>
    <location>
        <position position="69"/>
    </location>
</feature>
<feature type="sequence conflict" description="In Ref. 2; AA sequence." evidence="12" ref="2">
    <original>IPIFGTA</original>
    <variation>VPMFGPP</variation>
    <location>
        <begin position="71"/>
        <end position="77"/>
    </location>
</feature>
<feature type="sequence conflict" description="In Ref. 3; AA sequence." evidence="12" ref="3">
    <original>IPI</original>
    <variation>PLR</variation>
    <location>
        <begin position="71"/>
        <end position="73"/>
    </location>
</feature>
<feature type="sequence conflict" description="In Ref. 3; AA sequence." evidence="12" ref="3">
    <original>GTANYAQKFQG</original>
    <variation>NGEVKNPGSVV</variation>
    <location>
        <begin position="75"/>
        <end position="85"/>
    </location>
</feature>
<feature type="sequence conflict" description="In Ref. 3; AA sequence." evidence="12" ref="3">
    <original>NYAQK</original>
    <variation>KWTDP</variation>
    <location>
        <begin position="78"/>
        <end position="82"/>
    </location>
</feature>
<feature type="sequence conflict" description="In Ref. 3; AA sequence." evidence="12" ref="3">
    <original>G</original>
    <variation>GVYIKWE</variation>
    <location>
        <position position="85"/>
    </location>
</feature>
<feature type="sequence conflict" description="In Ref. 3; AA sequence." evidence="12" ref="3">
    <original>T</original>
    <variation>S</variation>
    <location>
        <position position="88"/>
    </location>
</feature>
<feature type="sequence conflict" description="In Ref. 3; AA sequence." evidence="12" ref="3">
    <original>ITADK</original>
    <variation>VSLKP</variation>
    <location>
        <begin position="89"/>
        <end position="93"/>
    </location>
</feature>
<feature type="sequence conflict" description="In Ref. 2; AA sequence." evidence="12" ref="2">
    <original>KSTS</original>
    <variation>ESTN</variation>
    <location>
        <begin position="93"/>
        <end position="96"/>
    </location>
</feature>
<feature type="sequence conflict" description="In Ref. 3; AA sequence." evidence="12" ref="3">
    <original>TST</original>
    <variation>FNQ</variation>
    <location>
        <begin position="95"/>
        <end position="97"/>
    </location>
</feature>
<feature type="sequence conflict" description="In Ref. 3; AA sequence." evidence="12" ref="3">
    <original>Y</original>
    <variation>H</variation>
    <location>
        <position position="99"/>
    </location>
</feature>
<feature type="sequence conflict" description="In Ref. 3; AA sequence." evidence="12" ref="3">
    <original>SS</original>
    <variation>VN</variation>
    <location>
        <begin position="103"/>
        <end position="104"/>
    </location>
</feature>
<feature type="sequence conflict" description="In Ref. 3; AA sequence." evidence="12" ref="3">
    <original>R</original>
    <variation>F</variation>
    <location>
        <position position="106"/>
    </location>
</feature>
<feature type="sequence conflict" description="In Ref. 3; AA sequence." evidence="12" ref="3">
    <original>S</original>
    <variation>N</variation>
    <location>
        <position position="107"/>
    </location>
</feature>
<feature type="sequence conflict" description="In Ref. 3; AA sequence." evidence="12" ref="3">
    <original>T</original>
    <variation>G</variation>
    <location>
        <position position="110"/>
    </location>
</feature>
<feature type="sequence conflict" description="In Ref. 2; AA sequence." evidence="12" ref="2">
    <original>VYYCAR</original>
    <variation>FYFCAG</variation>
    <location>
        <begin position="112"/>
        <end position="117"/>
    </location>
</feature>
<feature type="non-terminal residue">
    <location>
        <position position="117"/>
    </location>
</feature>
<gene>
    <name evidence="6 11" type="primary">IGHV1-69</name>
</gene>
<protein>
    <recommendedName>
        <fullName evidence="6 11">Immunoglobulin heavy variable 1-69</fullName>
    </recommendedName>
    <alternativeName>
        <fullName evidence="13">Ig heavy chain V-I region EU</fullName>
    </alternativeName>
    <alternativeName>
        <fullName evidence="14">Ig heavy chain V-I region SIE</fullName>
    </alternativeName>
    <alternativeName>
        <fullName evidence="14">Ig heavy chain V-I region WOL</fullName>
    </alternativeName>
</protein>
<name>HV169_HUMAN</name>
<accession>P01742</accession>
<accession>A0A0B4J1V5</accession>
<accession>P01760</accession>
<accession>P01761</accession>
<reference key="1">
    <citation type="journal article" date="2003" name="Nature">
        <title>The DNA sequence and analysis of human chromosome 14.</title>
        <authorList>
            <person name="Heilig R."/>
            <person name="Eckenberg R."/>
            <person name="Petit J.-L."/>
            <person name="Fonknechten N."/>
            <person name="Da Silva C."/>
            <person name="Cattolico L."/>
            <person name="Levy M."/>
            <person name="Barbe V."/>
            <person name="De Berardinis V."/>
            <person name="Ureta-Vidal A."/>
            <person name="Pelletier E."/>
            <person name="Vico V."/>
            <person name="Anthouard V."/>
            <person name="Rowen L."/>
            <person name="Madan A."/>
            <person name="Qin S."/>
            <person name="Sun H."/>
            <person name="Du H."/>
            <person name="Pepin K."/>
            <person name="Artiguenave F."/>
            <person name="Robert C."/>
            <person name="Cruaud C."/>
            <person name="Bruels T."/>
            <person name="Jaillon O."/>
            <person name="Friedlander L."/>
            <person name="Samson G."/>
            <person name="Brottier P."/>
            <person name="Cure S."/>
            <person name="Segurens B."/>
            <person name="Aniere F."/>
            <person name="Samain S."/>
            <person name="Crespeau H."/>
            <person name="Abbasi N."/>
            <person name="Aiach N."/>
            <person name="Boscus D."/>
            <person name="Dickhoff R."/>
            <person name="Dors M."/>
            <person name="Dubois I."/>
            <person name="Friedman C."/>
            <person name="Gouyvenoux M."/>
            <person name="James R."/>
            <person name="Madan A."/>
            <person name="Mairey-Estrada B."/>
            <person name="Mangenot S."/>
            <person name="Martins N."/>
            <person name="Menard M."/>
            <person name="Oztas S."/>
            <person name="Ratcliffe A."/>
            <person name="Shaffer T."/>
            <person name="Trask B."/>
            <person name="Vacherie B."/>
            <person name="Bellemere C."/>
            <person name="Belser C."/>
            <person name="Besnard-Gonnet M."/>
            <person name="Bartol-Mavel D."/>
            <person name="Boutard M."/>
            <person name="Briez-Silla S."/>
            <person name="Combette S."/>
            <person name="Dufosse-Laurent V."/>
            <person name="Ferron C."/>
            <person name="Lechaplais C."/>
            <person name="Louesse C."/>
            <person name="Muselet D."/>
            <person name="Magdelenat G."/>
            <person name="Pateau E."/>
            <person name="Petit E."/>
            <person name="Sirvain-Trukniewicz P."/>
            <person name="Trybou A."/>
            <person name="Vega-Czarny N."/>
            <person name="Bataille E."/>
            <person name="Bluet E."/>
            <person name="Bordelais I."/>
            <person name="Dubois M."/>
            <person name="Dumont C."/>
            <person name="Guerin T."/>
            <person name="Haffray S."/>
            <person name="Hammadi R."/>
            <person name="Muanga J."/>
            <person name="Pellouin V."/>
            <person name="Robert D."/>
            <person name="Wunderle E."/>
            <person name="Gauguet G."/>
            <person name="Roy A."/>
            <person name="Sainte-Marthe L."/>
            <person name="Verdier J."/>
            <person name="Verdier-Discala C."/>
            <person name="Hillier L.W."/>
            <person name="Fulton L."/>
            <person name="McPherson J."/>
            <person name="Matsuda F."/>
            <person name="Wilson R."/>
            <person name="Scarpelli C."/>
            <person name="Gyapay G."/>
            <person name="Wincker P."/>
            <person name="Saurin W."/>
            <person name="Quetier F."/>
            <person name="Waterston R."/>
            <person name="Hood L."/>
            <person name="Weissenbach J."/>
        </authorList>
    </citation>
    <scope>NUCLEOTIDE SEQUENCE [LARGE SCALE GENOMIC DNA] (IMGT ALLELE IGHV1-69*06)</scope>
</reference>
<reference key="2">
    <citation type="journal article" date="1970" name="Biochemistry">
        <title>The covalent structure of a human gamma G-immunoglobulin. VII. Amino acid sequence of heavy-chain cyanogen bromide fragments H1-H4.</title>
        <authorList>
            <person name="Cunningham B.A."/>
            <person name="Rutishauser U."/>
            <person name="Gall W.E."/>
            <person name="Gottlieb P.D."/>
            <person name="Waxdal M.J."/>
            <person name="Edelman G.M."/>
        </authorList>
    </citation>
    <scope>PROTEIN SEQUENCE OF 20-117</scope>
    <scope>PYROGLUTAMATE FORMATION AT GLN-20</scope>
</reference>
<reference key="3">
    <citation type="journal article" date="1981" name="Biochemistry">
        <title>Amino acid sequence of the variable regions of heavy chains from two idiotypically cross-reactive human IgM anti-gamma-globulins of the Wa group.</title>
        <authorList>
            <person name="Andrews D.W."/>
            <person name="Capra J.D."/>
        </authorList>
    </citation>
    <scope>PROTEIN SEQUENCE OF 20-117</scope>
    <scope>PYROGLUTAMATE FORMATION AT GLN-20</scope>
</reference>
<reference key="4">
    <citation type="journal article" date="1970" name="Biochemistry">
        <title>The covalent structure of a human gamma G-immunoglobulin. X. Intrachain disulfide bonds.</title>
        <authorList>
            <person name="Gall W.E."/>
            <person name="Edelman G.M."/>
        </authorList>
    </citation>
    <scope>DISULFIDE BOND</scope>
</reference>
<reference key="5">
    <citation type="journal article" date="2001" name="Exp. Clin. Immunogenet.">
        <title>Nomenclature of the human immunoglobulin heavy (IGH) genes.</title>
        <authorList>
            <person name="Lefranc M.P."/>
        </authorList>
    </citation>
    <scope>NOMENCLATURE</scope>
</reference>
<reference key="6">
    <citation type="book" date="2001" name="The Immunoglobulin FactsBook.">
        <title>The Immunoglobulin FactsBook.</title>
        <editorList>
            <person name="Lefranc M.P."/>
            <person name="Lefranc G."/>
        </editorList>
        <authorList>
            <person name="Lefranc M.P."/>
            <person name="Lefranc G."/>
        </authorList>
    </citation>
    <scope>NOMENCLATURE</scope>
</reference>
<reference key="7">
    <citation type="journal article" date="2007" name="Annu. Rev. Genet.">
        <title>Immunoglobulin somatic hypermutation.</title>
        <authorList>
            <person name="Teng G."/>
            <person name="Papavasiliou F.N."/>
        </authorList>
    </citation>
    <scope>REVIEW ON SOMATIC HYPERMUTATION</scope>
</reference>
<reference key="8">
    <citation type="journal article" date="2010" name="J. Allergy Clin. Immunol.">
        <title>Structure and function of immunoglobulins.</title>
        <authorList>
            <person name="Schroeder H.W. Jr."/>
            <person name="Cavacini L."/>
        </authorList>
    </citation>
    <scope>REVIEW ON IMMUNOGLOBULINS</scope>
</reference>
<reference key="9">
    <citation type="journal article" date="2012" name="Nat. Rev. Immunol.">
        <title>Molecular programming of B cell memory.</title>
        <authorList>
            <person name="McHeyzer-Williams M."/>
            <person name="Okitsu S."/>
            <person name="Wang N."/>
            <person name="McHeyzer-Williams L."/>
        </authorList>
    </citation>
    <scope>REVIEW ON FUNCTION</scope>
</reference>
<reference key="10">
    <citation type="journal article" date="2014" name="Front. Immunol.">
        <title>Immunoglobulin and T Cell Receptor Genes: IMGT((R)) and the Birth and Rise of Immunoinformatics.</title>
        <authorList>
            <person name="Lefranc M.P."/>
        </authorList>
    </citation>
    <scope>NOMENCLATURE</scope>
</reference>
<sequence>MDWTWRFLFVVAAATGVQSQVQLVQSGAEVKKPGSSVKVSCKASGGTFSSYAISWVRQAPGQGLEWMGGIIPIFGTANYAQKFQGRVTITADKSTSTAYMELSSLRSEDTAVYYCAR</sequence>
<dbReference type="EMBL" id="AC245369">
    <property type="status" value="NOT_ANNOTATED_CDS"/>
    <property type="molecule type" value="Genomic_DNA"/>
</dbReference>
<dbReference type="PIR" id="A02043">
    <property type="entry name" value="M1HUWL"/>
</dbReference>
<dbReference type="PIR" id="A02044">
    <property type="entry name" value="M1HUSI"/>
</dbReference>
<dbReference type="PIR" id="A90563">
    <property type="entry name" value="G1HUEU"/>
</dbReference>
<dbReference type="EMDB" id="EMD-10733"/>
<dbReference type="EMDB" id="EMD-34259"/>
<dbReference type="SMR" id="P01742"/>
<dbReference type="FunCoup" id="P01742">
    <property type="interactions" value="371"/>
</dbReference>
<dbReference type="IntAct" id="P01742">
    <property type="interactions" value="1"/>
</dbReference>
<dbReference type="IMGT_GENE-DB" id="IGHV1-69"/>
<dbReference type="iPTMnet" id="P01742"/>
<dbReference type="PhosphoSitePlus" id="P01742"/>
<dbReference type="BioMuta" id="IGHV1-69"/>
<dbReference type="jPOST" id="P01742"/>
<dbReference type="MassIVE" id="P01742"/>
<dbReference type="Ensembl" id="ENST00000390633.2">
    <property type="protein sequence ID" value="ENSP00000375042.2"/>
    <property type="gene ID" value="ENSG00000211973.2"/>
</dbReference>
<dbReference type="Ensembl" id="ENST00000632882.1">
    <property type="protein sequence ID" value="ENSP00000488090.1"/>
    <property type="gene ID" value="ENSG00000282350.1"/>
</dbReference>
<dbReference type="AGR" id="HGNC:5558"/>
<dbReference type="GeneCards" id="IGHV1-69"/>
<dbReference type="HGNC" id="HGNC:5558">
    <property type="gene designation" value="IGHV1-69"/>
</dbReference>
<dbReference type="HPA" id="ENSG00000211973">
    <property type="expression patterns" value="Group enriched (gallbladder, intestine, urinary bladder)"/>
</dbReference>
<dbReference type="neXtProt" id="NX_P01742"/>
<dbReference type="OpenTargets" id="ENSG00000211973"/>
<dbReference type="VEuPathDB" id="HostDB:ENSG00000211973"/>
<dbReference type="GeneTree" id="ENSGT00950000183013"/>
<dbReference type="InParanoid" id="P01742"/>
<dbReference type="OMA" id="STYAISW"/>
<dbReference type="PAN-GO" id="P01742">
    <property type="GO annotations" value="11 GO annotations based on evolutionary models"/>
</dbReference>
<dbReference type="PhylomeDB" id="P01742"/>
<dbReference type="PathwayCommons" id="P01742"/>
<dbReference type="Reactome" id="R-HSA-166663">
    <property type="pathway name" value="Initial triggering of complement"/>
</dbReference>
<dbReference type="Reactome" id="R-HSA-173623">
    <property type="pathway name" value="Classical antibody-mediated complement activation"/>
</dbReference>
<dbReference type="Reactome" id="R-HSA-198933">
    <property type="pathway name" value="Immunoregulatory interactions between a Lymphoid and a non-Lymphoid cell"/>
</dbReference>
<dbReference type="Reactome" id="R-HSA-202733">
    <property type="pathway name" value="Cell surface interactions at the vascular wall"/>
</dbReference>
<dbReference type="Reactome" id="R-HSA-2029481">
    <property type="pathway name" value="FCGR activation"/>
</dbReference>
<dbReference type="Reactome" id="R-HSA-2029482">
    <property type="pathway name" value="Regulation of actin dynamics for phagocytic cup formation"/>
</dbReference>
<dbReference type="Reactome" id="R-HSA-2029485">
    <property type="pathway name" value="Role of phospholipids in phagocytosis"/>
</dbReference>
<dbReference type="Reactome" id="R-HSA-2168880">
    <property type="pathway name" value="Scavenging of heme from plasma"/>
</dbReference>
<dbReference type="Reactome" id="R-HSA-2454202">
    <property type="pathway name" value="Fc epsilon receptor (FCERI) signaling"/>
</dbReference>
<dbReference type="Reactome" id="R-HSA-2730905">
    <property type="pathway name" value="Role of LAT2/NTAL/LAB on calcium mobilization"/>
</dbReference>
<dbReference type="Reactome" id="R-HSA-2871796">
    <property type="pathway name" value="FCERI mediated MAPK activation"/>
</dbReference>
<dbReference type="Reactome" id="R-HSA-2871809">
    <property type="pathway name" value="FCERI mediated Ca+2 mobilization"/>
</dbReference>
<dbReference type="Reactome" id="R-HSA-2871837">
    <property type="pathway name" value="FCERI mediated NF-kB activation"/>
</dbReference>
<dbReference type="Reactome" id="R-HSA-5690714">
    <property type="pathway name" value="CD22 mediated BCR regulation"/>
</dbReference>
<dbReference type="Reactome" id="R-HSA-9664323">
    <property type="pathway name" value="FCGR3A-mediated IL10 synthesis"/>
</dbReference>
<dbReference type="Reactome" id="R-HSA-9664422">
    <property type="pathway name" value="FCGR3A-mediated phagocytosis"/>
</dbReference>
<dbReference type="Reactome" id="R-HSA-9679191">
    <property type="pathway name" value="Potential therapeutics for SARS"/>
</dbReference>
<dbReference type="Reactome" id="R-HSA-977606">
    <property type="pathway name" value="Regulation of Complement cascade"/>
</dbReference>
<dbReference type="Reactome" id="R-HSA-983695">
    <property type="pathway name" value="Antigen activates B Cell Receptor (BCR) leading to generation of second messengers"/>
</dbReference>
<dbReference type="ChiTaRS" id="IGHV1-69">
    <property type="organism name" value="human"/>
</dbReference>
<dbReference type="Pharos" id="P01742">
    <property type="development level" value="Tdark"/>
</dbReference>
<dbReference type="PRO" id="PR:P01742"/>
<dbReference type="Proteomes" id="UP000005640">
    <property type="component" value="Chromosome 14"/>
</dbReference>
<dbReference type="RNAct" id="P01742">
    <property type="molecule type" value="protein"/>
</dbReference>
<dbReference type="Bgee" id="ENSG00000211973">
    <property type="expression patterns" value="Expressed in vermiform appendix and 82 other cell types or tissues"/>
</dbReference>
<dbReference type="GO" id="GO:0005576">
    <property type="term" value="C:extracellular region"/>
    <property type="evidence" value="ECO:0000304"/>
    <property type="project" value="Reactome"/>
</dbReference>
<dbReference type="GO" id="GO:0019814">
    <property type="term" value="C:immunoglobulin complex"/>
    <property type="evidence" value="ECO:0007669"/>
    <property type="project" value="UniProtKB-KW"/>
</dbReference>
<dbReference type="GO" id="GO:0005886">
    <property type="term" value="C:plasma membrane"/>
    <property type="evidence" value="ECO:0000304"/>
    <property type="project" value="Reactome"/>
</dbReference>
<dbReference type="GO" id="GO:0003823">
    <property type="term" value="F:antigen binding"/>
    <property type="evidence" value="ECO:0000318"/>
    <property type="project" value="GO_Central"/>
</dbReference>
<dbReference type="GO" id="GO:0006955">
    <property type="term" value="P:immune response"/>
    <property type="evidence" value="ECO:0000303"/>
    <property type="project" value="UniProtKB"/>
</dbReference>
<dbReference type="GO" id="GO:0016064">
    <property type="term" value="P:immunoglobulin mediated immune response"/>
    <property type="evidence" value="ECO:0000318"/>
    <property type="project" value="GO_Central"/>
</dbReference>
<dbReference type="FunFam" id="2.60.40.10:FF:000556">
    <property type="entry name" value="Immunoglobulin heavy variable 7-81 (non-functional)"/>
    <property type="match status" value="1"/>
</dbReference>
<dbReference type="Gene3D" id="2.60.40.10">
    <property type="entry name" value="Immunoglobulins"/>
    <property type="match status" value="1"/>
</dbReference>
<dbReference type="InterPro" id="IPR007110">
    <property type="entry name" value="Ig-like_dom"/>
</dbReference>
<dbReference type="InterPro" id="IPR036179">
    <property type="entry name" value="Ig-like_dom_sf"/>
</dbReference>
<dbReference type="InterPro" id="IPR013783">
    <property type="entry name" value="Ig-like_fold"/>
</dbReference>
<dbReference type="InterPro" id="IPR013106">
    <property type="entry name" value="Ig_V-set"/>
</dbReference>
<dbReference type="InterPro" id="IPR050199">
    <property type="entry name" value="IgHV"/>
</dbReference>
<dbReference type="PANTHER" id="PTHR23266">
    <property type="entry name" value="IMMUNOGLOBULIN HEAVY CHAIN"/>
    <property type="match status" value="1"/>
</dbReference>
<dbReference type="Pfam" id="PF07686">
    <property type="entry name" value="V-set"/>
    <property type="match status" value="1"/>
</dbReference>
<dbReference type="SMART" id="SM00406">
    <property type="entry name" value="IGv"/>
    <property type="match status" value="1"/>
</dbReference>
<dbReference type="SUPFAM" id="SSF48726">
    <property type="entry name" value="Immunoglobulin"/>
    <property type="match status" value="1"/>
</dbReference>
<dbReference type="PROSITE" id="PS50835">
    <property type="entry name" value="IG_LIKE"/>
    <property type="match status" value="1"/>
</dbReference>